<evidence type="ECO:0000250" key="1">
    <source>
        <dbReference type="UniProtKB" id="P50395"/>
    </source>
</evidence>
<evidence type="ECO:0000250" key="2">
    <source>
        <dbReference type="UniProtKB" id="P50399"/>
    </source>
</evidence>
<evidence type="ECO:0000250" key="3">
    <source>
        <dbReference type="UniProtKB" id="Q61598"/>
    </source>
</evidence>
<evidence type="ECO:0000305" key="4"/>
<evidence type="ECO:0000305" key="5">
    <source>
    </source>
</evidence>
<feature type="chain" id="PRO_0000056677" description="Rab GDP dissociation inhibitor beta">
    <location>
        <begin position="1"/>
        <end position="445"/>
    </location>
</feature>
<feature type="modified residue" description="N-acetylmethionine" evidence="1">
    <location>
        <position position="1"/>
    </location>
</feature>
<feature type="modified residue" description="N6-succinyllysine" evidence="3">
    <location>
        <position position="57"/>
    </location>
</feature>
<feature type="modified residue" description="N6-acetyllysine" evidence="1">
    <location>
        <position position="112"/>
    </location>
</feature>
<feature type="modified residue" description="Phosphoserine" evidence="2">
    <location>
        <position position="130"/>
    </location>
</feature>
<feature type="modified residue" description="N6-acetyllysine" evidence="1">
    <location>
        <position position="269"/>
    </location>
</feature>
<feature type="modified residue" description="Phosphoserine" evidence="1">
    <location>
        <position position="382"/>
    </location>
</feature>
<organism>
    <name type="scientific">Bos taurus</name>
    <name type="common">Bovine</name>
    <dbReference type="NCBI Taxonomy" id="9913"/>
    <lineage>
        <taxon>Eukaryota</taxon>
        <taxon>Metazoa</taxon>
        <taxon>Chordata</taxon>
        <taxon>Craniata</taxon>
        <taxon>Vertebrata</taxon>
        <taxon>Euteleostomi</taxon>
        <taxon>Mammalia</taxon>
        <taxon>Eutheria</taxon>
        <taxon>Laurasiatheria</taxon>
        <taxon>Artiodactyla</taxon>
        <taxon>Ruminantia</taxon>
        <taxon>Pecora</taxon>
        <taxon>Bovidae</taxon>
        <taxon>Bovinae</taxon>
        <taxon>Bos</taxon>
    </lineage>
</organism>
<accession>P50397</accession>
<accession>A5D985</accession>
<accession>Q3MHL1</accession>
<reference key="1">
    <citation type="journal article" date="1994" name="Mol. Cell. Biol.">
        <title>Cloning, characterization, and expression of a novel GDP dissociation inhibitor isoform from skeletal muscle.</title>
        <authorList>
            <person name="Shisheva A."/>
            <person name="Suedhof T.C."/>
            <person name="Czech M.P."/>
        </authorList>
    </citation>
    <scope>NUCLEOTIDE SEQUENCE [MRNA]</scope>
</reference>
<reference key="2">
    <citation type="journal article" date="2005" name="BMC Genomics">
        <title>Characterization of 954 bovine full-CDS cDNA sequences.</title>
        <authorList>
            <person name="Harhay G.P."/>
            <person name="Sonstegard T.S."/>
            <person name="Keele J.W."/>
            <person name="Heaton M.P."/>
            <person name="Clawson M.L."/>
            <person name="Snelling W.M."/>
            <person name="Wiedmann R.T."/>
            <person name="Van Tassell C.P."/>
            <person name="Smith T.P.L."/>
        </authorList>
    </citation>
    <scope>NUCLEOTIDE SEQUENCE [LARGE SCALE MRNA]</scope>
</reference>
<reference key="3">
    <citation type="submission" date="2005-09" db="EMBL/GenBank/DDBJ databases">
        <authorList>
            <consortium name="NIH - Mammalian Gene Collection (MGC) project"/>
        </authorList>
    </citation>
    <scope>NUCLEOTIDE SEQUENCE [LARGE SCALE MRNA]</scope>
    <source>
        <strain>Hereford</strain>
        <tissue>Thymus</tissue>
    </source>
</reference>
<dbReference type="EMBL" id="U07951">
    <property type="protein sequence ID" value="AAB16908.1"/>
    <property type="molecule type" value="mRNA"/>
</dbReference>
<dbReference type="EMBL" id="BT030504">
    <property type="protein sequence ID" value="ABQ12944.1"/>
    <property type="molecule type" value="mRNA"/>
</dbReference>
<dbReference type="EMBL" id="BC105197">
    <property type="protein sequence ID" value="AAI05198.1"/>
    <property type="molecule type" value="mRNA"/>
</dbReference>
<dbReference type="PIR" id="A56024">
    <property type="entry name" value="A56024"/>
</dbReference>
<dbReference type="RefSeq" id="NP_001028934.1">
    <property type="nucleotide sequence ID" value="NM_001033762.2"/>
</dbReference>
<dbReference type="SMR" id="P50397"/>
<dbReference type="FunCoup" id="P50397">
    <property type="interactions" value="3009"/>
</dbReference>
<dbReference type="STRING" id="9913.ENSBTAP00000073322"/>
<dbReference type="PaxDb" id="9913-ENSBTAP00000006992"/>
<dbReference type="PeptideAtlas" id="P50397"/>
<dbReference type="Ensembl" id="ENSBTAT00000078619.2">
    <property type="protein sequence ID" value="ENSBTAP00000073322.2"/>
    <property type="gene ID" value="ENSBTAG00000005316.7"/>
</dbReference>
<dbReference type="GeneID" id="509832"/>
<dbReference type="KEGG" id="bta:509832"/>
<dbReference type="CTD" id="2665"/>
<dbReference type="VGNC" id="VGNC:29308">
    <property type="gene designation" value="GDI2"/>
</dbReference>
<dbReference type="eggNOG" id="KOG1439">
    <property type="taxonomic scope" value="Eukaryota"/>
</dbReference>
<dbReference type="GeneTree" id="ENSGT00950000182994"/>
<dbReference type="HOGENOM" id="CLU_021695_0_0_1"/>
<dbReference type="InParanoid" id="P50397"/>
<dbReference type="OrthoDB" id="9446342at2759"/>
<dbReference type="TreeFam" id="TF300449"/>
<dbReference type="Proteomes" id="UP000009136">
    <property type="component" value="Chromosome 13"/>
</dbReference>
<dbReference type="GO" id="GO:0005829">
    <property type="term" value="C:cytosol"/>
    <property type="evidence" value="ECO:0000318"/>
    <property type="project" value="GO_Central"/>
</dbReference>
<dbReference type="GO" id="GO:0005794">
    <property type="term" value="C:Golgi apparatus"/>
    <property type="evidence" value="ECO:0007669"/>
    <property type="project" value="UniProtKB-SubCell"/>
</dbReference>
<dbReference type="GO" id="GO:0016020">
    <property type="term" value="C:membrane"/>
    <property type="evidence" value="ECO:0007669"/>
    <property type="project" value="UniProtKB-SubCell"/>
</dbReference>
<dbReference type="GO" id="GO:0005096">
    <property type="term" value="F:GTPase activator activity"/>
    <property type="evidence" value="ECO:0007669"/>
    <property type="project" value="UniProtKB-KW"/>
</dbReference>
<dbReference type="GO" id="GO:0005093">
    <property type="term" value="F:Rab GDP-dissociation inhibitor activity"/>
    <property type="evidence" value="ECO:0000318"/>
    <property type="project" value="GO_Central"/>
</dbReference>
<dbReference type="GO" id="GO:1902018">
    <property type="term" value="P:negative regulation of cilium assembly"/>
    <property type="evidence" value="ECO:0000250"/>
    <property type="project" value="UniProtKB"/>
</dbReference>
<dbReference type="GO" id="GO:1903565">
    <property type="term" value="P:negative regulation of protein localization to cilium"/>
    <property type="evidence" value="ECO:0000250"/>
    <property type="project" value="UniProtKB"/>
</dbReference>
<dbReference type="GO" id="GO:0015031">
    <property type="term" value="P:protein transport"/>
    <property type="evidence" value="ECO:0007669"/>
    <property type="project" value="InterPro"/>
</dbReference>
<dbReference type="GO" id="GO:0007264">
    <property type="term" value="P:small GTPase-mediated signal transduction"/>
    <property type="evidence" value="ECO:0007669"/>
    <property type="project" value="InterPro"/>
</dbReference>
<dbReference type="GO" id="GO:0016192">
    <property type="term" value="P:vesicle-mediated transport"/>
    <property type="evidence" value="ECO:0000318"/>
    <property type="project" value="GO_Central"/>
</dbReference>
<dbReference type="FunFam" id="1.10.405.10:FF:000001">
    <property type="entry name" value="Rab GDP dissociation inhibitor"/>
    <property type="match status" value="1"/>
</dbReference>
<dbReference type="FunFam" id="3.30.519.10:FF:000005">
    <property type="entry name" value="Rab GDP dissociation inhibitor"/>
    <property type="match status" value="1"/>
</dbReference>
<dbReference type="FunFam" id="3.30.519.10:FF:000014">
    <property type="entry name" value="Rab GDP dissociation inhibitor"/>
    <property type="match status" value="1"/>
</dbReference>
<dbReference type="FunFam" id="3.50.50.60:FF:000158">
    <property type="entry name" value="Rab GDP dissociation inhibitor"/>
    <property type="match status" value="1"/>
</dbReference>
<dbReference type="FunFam" id="3.50.50.60:FF:000232">
    <property type="entry name" value="Rab GDP dissociation inhibitor"/>
    <property type="match status" value="1"/>
</dbReference>
<dbReference type="Gene3D" id="3.50.50.60">
    <property type="entry name" value="FAD/NAD(P)-binding domain"/>
    <property type="match status" value="1"/>
</dbReference>
<dbReference type="Gene3D" id="1.10.405.10">
    <property type="entry name" value="Guanine Nucleotide Dissociation Inhibitor, domain 1"/>
    <property type="match status" value="1"/>
</dbReference>
<dbReference type="Gene3D" id="3.30.519.10">
    <property type="entry name" value="Guanine Nucleotide Dissociation Inhibitor, domain 2"/>
    <property type="match status" value="1"/>
</dbReference>
<dbReference type="InterPro" id="IPR036188">
    <property type="entry name" value="FAD/NAD-bd_sf"/>
</dbReference>
<dbReference type="InterPro" id="IPR018203">
    <property type="entry name" value="GDP_dissociation_inhibitor"/>
</dbReference>
<dbReference type="InterPro" id="IPR000806">
    <property type="entry name" value="RabGDI"/>
</dbReference>
<dbReference type="PANTHER" id="PTHR11787:SF1">
    <property type="entry name" value="RAB GDP DISSOCIATION INHIBITOR BETA"/>
    <property type="match status" value="1"/>
</dbReference>
<dbReference type="PANTHER" id="PTHR11787">
    <property type="entry name" value="RAB GDP-DISSOCIATION INHIBITOR"/>
    <property type="match status" value="1"/>
</dbReference>
<dbReference type="Pfam" id="PF00996">
    <property type="entry name" value="GDI"/>
    <property type="match status" value="1"/>
</dbReference>
<dbReference type="PRINTS" id="PR00892">
    <property type="entry name" value="RABGDI"/>
</dbReference>
<dbReference type="PRINTS" id="PR00891">
    <property type="entry name" value="RABGDIREP"/>
</dbReference>
<dbReference type="SUPFAM" id="SSF51905">
    <property type="entry name" value="FAD/NAD(P)-binding domain"/>
    <property type="match status" value="2"/>
</dbReference>
<keyword id="KW-0007">Acetylation</keyword>
<keyword id="KW-0963">Cytoplasm</keyword>
<keyword id="KW-0333">Golgi apparatus</keyword>
<keyword id="KW-0343">GTPase activation</keyword>
<keyword id="KW-0472">Membrane</keyword>
<keyword id="KW-0597">Phosphoprotein</keyword>
<keyword id="KW-1185">Reference proteome</keyword>
<proteinExistence type="evidence at transcript level"/>
<comment type="function">
    <text evidence="1">GDP-dissociation inhibitor preventing the GDP to GTP exchange of most Rab proteins. By keeping these small GTPases in their inactive GDP-bound form regulates intracellular membrane trafficking. Negatively regulates protein transport to the cilium and ciliogenesis through the inhibition of RAB8A.</text>
</comment>
<comment type="subunit">
    <text evidence="1">Interacts with RHOH. Interacts with the GDP-bound inactive forms of RAB3A, RAB3B, RAB3C, RAB5A, RAB5B, RAB5C, RAB8A, RAB8B, RAB10, RAB12, RAB35, and RAB43; binds RAB3D to a lesser extent. Interacts with DZIP1; this interaction negatively regulates the interaction of GDI2 with GDP-bound RAB8A.</text>
</comment>
<comment type="subcellular location">
    <subcellularLocation>
        <location>Cytoplasm</location>
    </subcellularLocation>
    <subcellularLocation>
        <location>Membrane</location>
        <topology>Peripheral membrane protein</topology>
    </subcellularLocation>
    <subcellularLocation>
        <location evidence="1">Golgi apparatus</location>
        <location evidence="1">trans-Golgi network</location>
    </subcellularLocation>
</comment>
<comment type="tissue specificity">
    <text>Ubiquitously expressed.</text>
</comment>
<comment type="similarity">
    <text evidence="4">Belongs to the Rab GDI family.</text>
</comment>
<comment type="caution">
    <text evidence="5">Was originally thought to originate from mouse.</text>
</comment>
<name>GDIB_BOVIN</name>
<protein>
    <recommendedName>
        <fullName>Rab GDP dissociation inhibitor beta</fullName>
        <shortName>Rab GDI beta</shortName>
    </recommendedName>
    <alternativeName>
        <fullName>Guanosine diphosphate dissociation inhibitor 2</fullName>
        <shortName>GDI-2</shortName>
    </alternativeName>
</protein>
<sequence length="445" mass="50488">MNEEYDVIVLGTGLTECILSGIMSVNGKKVLHMDRNPYYGGESASITPLEDLYKRFKIPGAPPASMGRGRDWNVDLIPKFLMANGQLVKMLLFTEVTRYLDFKVTEGSFVYKGGKIYKVPSTEAEALASSLMGLFEKRRFRKFLVYVANFDENDPRTFEGIDPKKTSMREVYKKFDLGQDVIDFTGHALALYRTDDYLDQPCCETINRIKLYSESLARYGKSPYLYPLYGLGELPQGFARLSAIYGGTYMLNKPIEEIIMQNGKVIGVKSEGEIARCKQLICDPSYVKDRVEKVGQVIRVICILSHPIKNTNDANSCQIIIPQNQVNRKSDIYVCMISSAHNVAAQGKYIAIASTTVETKEPEKEIRPALELLEPIEQKFVSISDLLVPKDLGTESQIFISRTYDATTHFETTCDDIKDIYKRMMGSEFDFEEMKRKKNDIYGEE</sequence>
<gene>
    <name type="primary">GDI2</name>
    <name type="synonym">RABGDIB</name>
</gene>